<protein>
    <recommendedName>
        <fullName evidence="1">N-acetylneuraminate epimerase</fullName>
        <ecNumber evidence="1">5.1.3.24</ecNumber>
    </recommendedName>
    <alternativeName>
        <fullName evidence="1">N-acetylneuraminate mutarotase</fullName>
        <shortName evidence="1">Neu5Ac mutarotase</shortName>
    </alternativeName>
    <alternativeName>
        <fullName evidence="1">Sialic acid epimerase</fullName>
    </alternativeName>
</protein>
<feature type="signal peptide" evidence="1">
    <location>
        <begin position="1"/>
        <end position="24"/>
    </location>
</feature>
<feature type="chain" id="PRO_0000016658" description="N-acetylneuraminate epimerase">
    <location>
        <begin position="25"/>
        <end position="384"/>
    </location>
</feature>
<feature type="repeat" description="Kelch 1">
    <location>
        <begin position="46"/>
        <end position="90"/>
    </location>
</feature>
<feature type="repeat" description="Kelch 2">
    <location>
        <begin position="92"/>
        <end position="145"/>
    </location>
</feature>
<feature type="repeat" description="Kelch 3">
    <location>
        <begin position="147"/>
        <end position="184"/>
    </location>
</feature>
<feature type="repeat" description="Kelch 4">
    <location>
        <begin position="185"/>
        <end position="230"/>
    </location>
</feature>
<feature type="repeat" description="Kelch 5">
    <location>
        <begin position="233"/>
        <end position="281"/>
    </location>
</feature>
<feature type="repeat" description="Kelch 6">
    <location>
        <begin position="303"/>
        <end position="352"/>
    </location>
</feature>
<feature type="repeat" description="Kelch 7">
    <location>
        <begin position="354"/>
        <end position="383"/>
    </location>
</feature>
<feature type="active site" description="Proton acceptor" evidence="1">
    <location>
        <position position="239"/>
    </location>
</feature>
<keyword id="KW-0119">Carbohydrate metabolism</keyword>
<keyword id="KW-0413">Isomerase</keyword>
<keyword id="KW-0880">Kelch repeat</keyword>
<keyword id="KW-0574">Periplasm</keyword>
<keyword id="KW-1185">Reference proteome</keyword>
<keyword id="KW-0677">Repeat</keyword>
<keyword id="KW-0732">Signal</keyword>
<evidence type="ECO:0000255" key="1">
    <source>
        <dbReference type="HAMAP-Rule" id="MF_01195"/>
    </source>
</evidence>
<proteinExistence type="inferred from homology"/>
<name>NANM_VIBCH</name>
<accession>Q9KR69</accession>
<sequence length="384" mass="41944">MNMKTLLTYATLLSVTAFSHVVYADNQWPDLPTGFKDGVGAQVGSKVYVGLGSLGKSFYVLDLNALSKGWQKIADFTGAERSGATASVIGNYIYLFGGSGKAEPSDPSPILFDSVYRYDTKKDSWEKMNTTSPVGLLGASSYSPDNRQILFFGGYNKAYFDRYLRDISTTDKQVNPEVWQRIVDDYMGMTPTDYKWNRNVISYLPEKQEWRDLGVSTYLPNCGSATVIEGNKVTLISGEIKPGLRTAEVKQYEFGMDQPWKSLLPLPAPQTSNIQEGVAGAFSGKTNGVVVVAGGANFHGAKQAFENGKMFAHEGLPKAFNSEIYVEKEGIWSTVNSLPEGLAYGASFTTSEGVLIVGGEKSGKEMSHKVYMLAWNGSTVEVID</sequence>
<comment type="function">
    <text evidence="1">Converts alpha-N-acetylneuranimic acid (Neu5Ac) to the beta-anomer, accelerating the equilibrium between the alpha- and beta-anomers. Probably facilitates sialidase-negative bacteria to compete successfully for limited amounts of extracellular Neu5Ac, which is likely taken up in the beta-anomer. In addition, the rapid removal of sialic acid from solution might be advantageous to the bacterium to damp down host responses.</text>
</comment>
<comment type="catalytic activity">
    <reaction evidence="1">
        <text>N-acetyl-alpha-neuraminate = N-acetyl-beta-neuraminate</text>
        <dbReference type="Rhea" id="RHEA:25233"/>
        <dbReference type="ChEBI" id="CHEBI:58705"/>
        <dbReference type="ChEBI" id="CHEBI:58770"/>
        <dbReference type="EC" id="5.1.3.24"/>
    </reaction>
</comment>
<comment type="subunit">
    <text evidence="1">Homodimer.</text>
</comment>
<comment type="subcellular location">
    <subcellularLocation>
        <location evidence="1">Periplasm</location>
    </subcellularLocation>
</comment>
<comment type="similarity">
    <text evidence="1">Belongs to the NanM family.</text>
</comment>
<reference key="1">
    <citation type="journal article" date="2000" name="Nature">
        <title>DNA sequence of both chromosomes of the cholera pathogen Vibrio cholerae.</title>
        <authorList>
            <person name="Heidelberg J.F."/>
            <person name="Eisen J.A."/>
            <person name="Nelson W.C."/>
            <person name="Clayton R.A."/>
            <person name="Gwinn M.L."/>
            <person name="Dodson R.J."/>
            <person name="Haft D.H."/>
            <person name="Hickey E.K."/>
            <person name="Peterson J.D."/>
            <person name="Umayam L.A."/>
            <person name="Gill S.R."/>
            <person name="Nelson K.E."/>
            <person name="Read T.D."/>
            <person name="Tettelin H."/>
            <person name="Richardson D.L."/>
            <person name="Ermolaeva M.D."/>
            <person name="Vamathevan J.J."/>
            <person name="Bass S."/>
            <person name="Qin H."/>
            <person name="Dragoi I."/>
            <person name="Sellers P."/>
            <person name="McDonald L.A."/>
            <person name="Utterback T.R."/>
            <person name="Fleischmann R.D."/>
            <person name="Nierman W.C."/>
            <person name="White O."/>
            <person name="Salzberg S.L."/>
            <person name="Smith H.O."/>
            <person name="Colwell R.R."/>
            <person name="Mekalanos J.J."/>
            <person name="Venter J.C."/>
            <person name="Fraser C.M."/>
        </authorList>
    </citation>
    <scope>NUCLEOTIDE SEQUENCE [LARGE SCALE GENOMIC DNA]</scope>
    <source>
        <strain>ATCC 39315 / El Tor Inaba N16961</strain>
    </source>
</reference>
<organism>
    <name type="scientific">Vibrio cholerae serotype O1 (strain ATCC 39315 / El Tor Inaba N16961)</name>
    <dbReference type="NCBI Taxonomy" id="243277"/>
    <lineage>
        <taxon>Bacteria</taxon>
        <taxon>Pseudomonadati</taxon>
        <taxon>Pseudomonadota</taxon>
        <taxon>Gammaproteobacteria</taxon>
        <taxon>Vibrionales</taxon>
        <taxon>Vibrionaceae</taxon>
        <taxon>Vibrio</taxon>
    </lineage>
</organism>
<gene>
    <name evidence="1" type="primary">nanM</name>
    <name type="ordered locus">VC_1774</name>
</gene>
<dbReference type="EC" id="5.1.3.24" evidence="1"/>
<dbReference type="EMBL" id="AE003852">
    <property type="protein sequence ID" value="AAF94923.1"/>
    <property type="molecule type" value="Genomic_DNA"/>
</dbReference>
<dbReference type="PIR" id="C82159">
    <property type="entry name" value="C82159"/>
</dbReference>
<dbReference type="RefSeq" id="NP_231409.1">
    <property type="nucleotide sequence ID" value="NC_002505.1"/>
</dbReference>
<dbReference type="RefSeq" id="WP_001056548.1">
    <property type="nucleotide sequence ID" value="NZ_LT906614.1"/>
</dbReference>
<dbReference type="SMR" id="Q9KR69"/>
<dbReference type="STRING" id="243277.VC_1774"/>
<dbReference type="DNASU" id="2613654"/>
<dbReference type="EnsemblBacteria" id="AAF94923">
    <property type="protein sequence ID" value="AAF94923"/>
    <property type="gene ID" value="VC_1774"/>
</dbReference>
<dbReference type="KEGG" id="vch:VC_1774"/>
<dbReference type="PATRIC" id="fig|243277.26.peg.1694"/>
<dbReference type="eggNOG" id="COG3055">
    <property type="taxonomic scope" value="Bacteria"/>
</dbReference>
<dbReference type="HOGENOM" id="CLU_061535_0_0_6"/>
<dbReference type="Proteomes" id="UP000000584">
    <property type="component" value="Chromosome 1"/>
</dbReference>
<dbReference type="GO" id="GO:0042597">
    <property type="term" value="C:periplasmic space"/>
    <property type="evidence" value="ECO:0007669"/>
    <property type="project" value="UniProtKB-SubCell"/>
</dbReference>
<dbReference type="GO" id="GO:0016857">
    <property type="term" value="F:racemase and epimerase activity, acting on carbohydrates and derivatives"/>
    <property type="evidence" value="ECO:0007669"/>
    <property type="project" value="UniProtKB-UniRule"/>
</dbReference>
<dbReference type="Gene3D" id="2.120.10.80">
    <property type="entry name" value="Kelch-type beta propeller"/>
    <property type="match status" value="2"/>
</dbReference>
<dbReference type="HAMAP" id="MF_01195">
    <property type="entry name" value="NanM"/>
    <property type="match status" value="1"/>
</dbReference>
<dbReference type="InterPro" id="IPR015915">
    <property type="entry name" value="Kelch-typ_b-propeller"/>
</dbReference>
<dbReference type="InterPro" id="IPR056734">
    <property type="entry name" value="NANM"/>
</dbReference>
<dbReference type="InterPro" id="IPR019936">
    <property type="entry name" value="NanM_proteobact"/>
</dbReference>
<dbReference type="NCBIfam" id="TIGR03547">
    <property type="entry name" value="muta_rot_YjhT"/>
    <property type="match status" value="1"/>
</dbReference>
<dbReference type="NCBIfam" id="NF010730">
    <property type="entry name" value="PRK14131.1"/>
    <property type="match status" value="1"/>
</dbReference>
<dbReference type="PANTHER" id="PTHR46093">
    <property type="entry name" value="ACYL-COA-BINDING DOMAIN-CONTAINING PROTEIN 5"/>
    <property type="match status" value="1"/>
</dbReference>
<dbReference type="PANTHER" id="PTHR46093:SF18">
    <property type="entry name" value="FIBRONECTIN TYPE-III DOMAIN-CONTAINING PROTEIN"/>
    <property type="match status" value="1"/>
</dbReference>
<dbReference type="Pfam" id="PF24996">
    <property type="entry name" value="NANM"/>
    <property type="match status" value="1"/>
</dbReference>
<dbReference type="SUPFAM" id="SSF117281">
    <property type="entry name" value="Kelch motif"/>
    <property type="match status" value="1"/>
</dbReference>